<dbReference type="EC" id="2.3.1.234" evidence="1"/>
<dbReference type="EMBL" id="FM177140">
    <property type="protein sequence ID" value="CAQ67496.1"/>
    <property type="molecule type" value="Genomic_DNA"/>
</dbReference>
<dbReference type="SMR" id="B3W9X7"/>
<dbReference type="KEGG" id="lcb:LCABL_24300"/>
<dbReference type="HOGENOM" id="CLU_023208_0_2_9"/>
<dbReference type="GO" id="GO:0005737">
    <property type="term" value="C:cytoplasm"/>
    <property type="evidence" value="ECO:0007669"/>
    <property type="project" value="UniProtKB-SubCell"/>
</dbReference>
<dbReference type="GO" id="GO:0005506">
    <property type="term" value="F:iron ion binding"/>
    <property type="evidence" value="ECO:0007669"/>
    <property type="project" value="UniProtKB-UniRule"/>
</dbReference>
<dbReference type="GO" id="GO:0061711">
    <property type="term" value="F:N(6)-L-threonylcarbamoyladenine synthase activity"/>
    <property type="evidence" value="ECO:0007669"/>
    <property type="project" value="UniProtKB-EC"/>
</dbReference>
<dbReference type="GO" id="GO:0002949">
    <property type="term" value="P:tRNA threonylcarbamoyladenosine modification"/>
    <property type="evidence" value="ECO:0007669"/>
    <property type="project" value="UniProtKB-UniRule"/>
</dbReference>
<dbReference type="CDD" id="cd24133">
    <property type="entry name" value="ASKHA_NBD_TsaD_bac"/>
    <property type="match status" value="1"/>
</dbReference>
<dbReference type="FunFam" id="3.30.420.40:FF:000012">
    <property type="entry name" value="tRNA N6-adenosine threonylcarbamoyltransferase"/>
    <property type="match status" value="1"/>
</dbReference>
<dbReference type="FunFam" id="3.30.420.40:FF:000040">
    <property type="entry name" value="tRNA N6-adenosine threonylcarbamoyltransferase"/>
    <property type="match status" value="1"/>
</dbReference>
<dbReference type="Gene3D" id="3.30.420.40">
    <property type="match status" value="2"/>
</dbReference>
<dbReference type="HAMAP" id="MF_01445">
    <property type="entry name" value="TsaD"/>
    <property type="match status" value="1"/>
</dbReference>
<dbReference type="InterPro" id="IPR043129">
    <property type="entry name" value="ATPase_NBD"/>
</dbReference>
<dbReference type="InterPro" id="IPR000905">
    <property type="entry name" value="Gcp-like_dom"/>
</dbReference>
<dbReference type="InterPro" id="IPR017861">
    <property type="entry name" value="KAE1/TsaD"/>
</dbReference>
<dbReference type="InterPro" id="IPR017860">
    <property type="entry name" value="Peptidase_M22_CS"/>
</dbReference>
<dbReference type="InterPro" id="IPR022450">
    <property type="entry name" value="TsaD"/>
</dbReference>
<dbReference type="NCBIfam" id="TIGR00329">
    <property type="entry name" value="gcp_kae1"/>
    <property type="match status" value="1"/>
</dbReference>
<dbReference type="NCBIfam" id="TIGR03723">
    <property type="entry name" value="T6A_TsaD_YgjD"/>
    <property type="match status" value="1"/>
</dbReference>
<dbReference type="PANTHER" id="PTHR11735">
    <property type="entry name" value="TRNA N6-ADENOSINE THREONYLCARBAMOYLTRANSFERASE"/>
    <property type="match status" value="1"/>
</dbReference>
<dbReference type="PANTHER" id="PTHR11735:SF6">
    <property type="entry name" value="TRNA N6-ADENOSINE THREONYLCARBAMOYLTRANSFERASE, MITOCHONDRIAL"/>
    <property type="match status" value="1"/>
</dbReference>
<dbReference type="Pfam" id="PF00814">
    <property type="entry name" value="TsaD"/>
    <property type="match status" value="1"/>
</dbReference>
<dbReference type="PRINTS" id="PR00789">
    <property type="entry name" value="OSIALOPTASE"/>
</dbReference>
<dbReference type="SUPFAM" id="SSF53067">
    <property type="entry name" value="Actin-like ATPase domain"/>
    <property type="match status" value="2"/>
</dbReference>
<dbReference type="PROSITE" id="PS01016">
    <property type="entry name" value="GLYCOPROTEASE"/>
    <property type="match status" value="1"/>
</dbReference>
<proteinExistence type="inferred from homology"/>
<sequence>MAARELILAFESSCDETSVAVVENGDTILSNIIATQIKSHQRFGGVVPEVASRHHVEQITLVTDAALKEAGVTYDDLTAVAVTYGPGLVGALLIGVTAAKTIAYAHHLPLIPVNHMAGHIYAARFVKPLAYPLLALAVSGGHTELVYMRSAGEFEIIGDTRDDAAGEAYDKVGRILGIPYPAGKEVDRLAHLGQDTFHFPRAMDKEDNLDFSFSGLKSAVINTVHHAHQLGQELSREDLAASFQAAVVDVLVHKTQKALHQYPVKQLIVAGGVAANQGLKEAMNETLAVNFPDVDVIVPPLRLTGDNGAMIGAAAHIEWAKQHLASESLNADPGLSFTHAS</sequence>
<evidence type="ECO:0000255" key="1">
    <source>
        <dbReference type="HAMAP-Rule" id="MF_01445"/>
    </source>
</evidence>
<keyword id="KW-0012">Acyltransferase</keyword>
<keyword id="KW-0963">Cytoplasm</keyword>
<keyword id="KW-0408">Iron</keyword>
<keyword id="KW-0479">Metal-binding</keyword>
<keyword id="KW-0808">Transferase</keyword>
<keyword id="KW-0819">tRNA processing</keyword>
<comment type="function">
    <text evidence="1">Required for the formation of a threonylcarbamoyl group on adenosine at position 37 (t(6)A37) in tRNAs that read codons beginning with adenine. Is involved in the transfer of the threonylcarbamoyl moiety of threonylcarbamoyl-AMP (TC-AMP) to the N6 group of A37, together with TsaE and TsaB. TsaD likely plays a direct catalytic role in this reaction.</text>
</comment>
<comment type="catalytic activity">
    <reaction evidence="1">
        <text>L-threonylcarbamoyladenylate + adenosine(37) in tRNA = N(6)-L-threonylcarbamoyladenosine(37) in tRNA + AMP + H(+)</text>
        <dbReference type="Rhea" id="RHEA:37059"/>
        <dbReference type="Rhea" id="RHEA-COMP:10162"/>
        <dbReference type="Rhea" id="RHEA-COMP:10163"/>
        <dbReference type="ChEBI" id="CHEBI:15378"/>
        <dbReference type="ChEBI" id="CHEBI:73682"/>
        <dbReference type="ChEBI" id="CHEBI:74411"/>
        <dbReference type="ChEBI" id="CHEBI:74418"/>
        <dbReference type="ChEBI" id="CHEBI:456215"/>
        <dbReference type="EC" id="2.3.1.234"/>
    </reaction>
</comment>
<comment type="cofactor">
    <cofactor evidence="1">
        <name>Fe(2+)</name>
        <dbReference type="ChEBI" id="CHEBI:29033"/>
    </cofactor>
    <text evidence="1">Binds 1 Fe(2+) ion per subunit.</text>
</comment>
<comment type="subcellular location">
    <subcellularLocation>
        <location evidence="1">Cytoplasm</location>
    </subcellularLocation>
</comment>
<comment type="similarity">
    <text evidence="1">Belongs to the KAE1 / TsaD family.</text>
</comment>
<gene>
    <name evidence="1" type="primary">tsaD</name>
    <name type="synonym">gcp</name>
    <name type="ordered locus">LCABL_24300</name>
</gene>
<protein>
    <recommendedName>
        <fullName evidence="1">tRNA N6-adenosine threonylcarbamoyltransferase</fullName>
        <ecNumber evidence="1">2.3.1.234</ecNumber>
    </recommendedName>
    <alternativeName>
        <fullName evidence="1">N6-L-threonylcarbamoyladenine synthase</fullName>
        <shortName evidence="1">t(6)A synthase</shortName>
    </alternativeName>
    <alternativeName>
        <fullName evidence="1">t(6)A37 threonylcarbamoyladenosine biosynthesis protein TsaD</fullName>
    </alternativeName>
    <alternativeName>
        <fullName evidence="1">tRNA threonylcarbamoyladenosine biosynthesis protein TsaD</fullName>
    </alternativeName>
</protein>
<organism>
    <name type="scientific">Lacticaseibacillus casei (strain BL23)</name>
    <name type="common">Lactobacillus casei</name>
    <dbReference type="NCBI Taxonomy" id="543734"/>
    <lineage>
        <taxon>Bacteria</taxon>
        <taxon>Bacillati</taxon>
        <taxon>Bacillota</taxon>
        <taxon>Bacilli</taxon>
        <taxon>Lactobacillales</taxon>
        <taxon>Lactobacillaceae</taxon>
        <taxon>Lacticaseibacillus</taxon>
    </lineage>
</organism>
<name>TSAD_LACCB</name>
<feature type="chain" id="PRO_1000145990" description="tRNA N6-adenosine threonylcarbamoyltransferase">
    <location>
        <begin position="1"/>
        <end position="341"/>
    </location>
</feature>
<feature type="binding site" evidence="1">
    <location>
        <position position="115"/>
    </location>
    <ligand>
        <name>Fe cation</name>
        <dbReference type="ChEBI" id="CHEBI:24875"/>
    </ligand>
</feature>
<feature type="binding site" evidence="1">
    <location>
        <position position="119"/>
    </location>
    <ligand>
        <name>Fe cation</name>
        <dbReference type="ChEBI" id="CHEBI:24875"/>
    </ligand>
</feature>
<feature type="binding site" evidence="1">
    <location>
        <begin position="137"/>
        <end position="141"/>
    </location>
    <ligand>
        <name>substrate</name>
    </ligand>
</feature>
<feature type="binding site" evidence="1">
    <location>
        <position position="170"/>
    </location>
    <ligand>
        <name>substrate</name>
    </ligand>
</feature>
<feature type="binding site" evidence="1">
    <location>
        <position position="183"/>
    </location>
    <ligand>
        <name>substrate</name>
    </ligand>
</feature>
<feature type="binding site" evidence="1">
    <location>
        <position position="187"/>
    </location>
    <ligand>
        <name>substrate</name>
    </ligand>
</feature>
<feature type="binding site" evidence="1">
    <location>
        <position position="276"/>
    </location>
    <ligand>
        <name>substrate</name>
    </ligand>
</feature>
<feature type="binding site" evidence="1">
    <location>
        <position position="306"/>
    </location>
    <ligand>
        <name>Fe cation</name>
        <dbReference type="ChEBI" id="CHEBI:24875"/>
    </ligand>
</feature>
<accession>B3W9X7</accession>
<reference key="1">
    <citation type="submission" date="2008-06" db="EMBL/GenBank/DDBJ databases">
        <title>Lactobacillus casei BL23 complete genome sequence.</title>
        <authorList>
            <person name="Maze A."/>
            <person name="Boel G."/>
            <person name="Bourand A."/>
            <person name="Loux V."/>
            <person name="Gibrat J.F."/>
            <person name="Zuniga M."/>
            <person name="Hartke A."/>
            <person name="Deutscher J."/>
        </authorList>
    </citation>
    <scope>NUCLEOTIDE SEQUENCE [LARGE SCALE GENOMIC DNA]</scope>
    <source>
        <strain>BL23</strain>
    </source>
</reference>